<comment type="function">
    <text evidence="3 4">RNA-binding protein, which regulates the expression of proteins required to control developmental timing of events during the L2 to L3 larval stage switch (PubMed:21471153). Binds to the 3'UTR of the transcript of the heterochronic protein lin-28 to post-transcriptionally negatively regulate its expression in certain tissue types in the later larval stages (PubMed:21471153). During larval development, controls the timing of seam cell division and terminal differentiation into adult alae (PubMed:21471153). In vitro, it can also bind to DNA through its first zinc finger (PubMed:21471153). May bind directly or indirectly to the promoter of the sex-determining factor xol-1 to activate its transcription (PubMed:23666922). Its activation of xol-1 transcription controls sex determination and X chromosome dosage compensation to promote male development (PubMed:23666922). Through the negative regulation of lin-28 transcript, it also has a role in the fox-1-sex-1-mediated determination of sexual fate (PubMed:21471153). Acts in the intestine to play a role in regulating adult lifespan (PubMed:21471153).</text>
</comment>
<comment type="subcellular location">
    <subcellularLocation>
        <location evidence="3 4">Nucleus</location>
    </subcellularLocation>
    <subcellularLocation>
        <location evidence="3">Cytoplasm</location>
    </subcellularLocation>
    <text evidence="3 4">In embryos, diffusely accumulates in the nucleus at the 20- to 30-cell stage, but nuclear localization decreases after the 200-cell stage (PubMed:23666922). Diffusely localized in the nucleus and cytoplasm during the L3 larval stage (PubMed:21471153).</text>
</comment>
<comment type="alternative products">
    <event type="alternative splicing"/>
    <isoform>
        <id>A0A0K3AUE4-1</id>
        <name evidence="13">g</name>
        <sequence type="displayed"/>
    </isoform>
    <isoform>
        <id>A0A0K3AUE4-2</id>
        <name evidence="7">a</name>
        <sequence type="described" ref="VSP_060636"/>
    </isoform>
    <isoform>
        <id>A0A0K3AUE4-3</id>
        <name evidence="8">b</name>
        <sequence type="described" ref="VSP_060636 VSP_060637 VSP_060639"/>
    </isoform>
    <isoform>
        <id>A0A0K3AUE4-4</id>
        <name evidence="9">c</name>
        <sequence type="described" ref="VSP_060636 VSP_060638 VSP_060640"/>
    </isoform>
    <isoform>
        <id>A0A0K3AUE4-5</id>
        <name evidence="10">d</name>
        <sequence type="described" ref="VSP_060634 VSP_060638 VSP_060640"/>
    </isoform>
    <isoform>
        <id>A0A0K3AUE4-6</id>
        <name evidence="11">e</name>
        <sequence type="described" ref="VSP_060633 VSP_060638 VSP_060640"/>
    </isoform>
    <isoform>
        <id>A0A0K3AUE4-7</id>
        <name evidence="12">f</name>
        <sequence type="described" ref="VSP_060638 VSP_060640"/>
    </isoform>
    <isoform>
        <id>A0A0K3AUE4-8</id>
        <name evidence="14">h</name>
        <sequence type="described" ref="VSP_060637 VSP_060638 VSP_060640"/>
    </isoform>
    <isoform>
        <id>A0A0K3AUE4-9</id>
        <name evidence="15">i</name>
        <sequence type="described" ref="VSP_060637"/>
    </isoform>
    <isoform>
        <id>A0A0K3AUE4-10</id>
        <name evidence="16">j</name>
        <sequence type="described" ref="VSP_060636 VSP_060637 VSP_060638 VSP_060640"/>
    </isoform>
    <isoform>
        <id>A0A0K3AUE4-11</id>
        <name evidence="17">k</name>
        <sequence type="described" ref="VSP_060635 VSP_060638 VSP_060640"/>
    </isoform>
    <isoform>
        <id>A0A0K3AUE4-12</id>
        <name evidence="18">l</name>
        <sequence type="described" ref="VSP_060635 VSP_060637 VSP_060638 VSP_060640"/>
    </isoform>
    <isoform>
        <id>A0A0K3AUE4-13</id>
        <name evidence="19">m</name>
        <sequence type="described" ref="VSP_060634 VSP_060637 VSP_060638 VSP_060640"/>
    </isoform>
    <isoform>
        <id>A0A0K3AUE4-14</id>
        <name evidence="20">n</name>
        <sequence type="described" ref="VSP_060635"/>
    </isoform>
    <isoform>
        <id>A0A0K3AUE4-15</id>
        <name evidence="21">o</name>
        <sequence type="described" ref="VSP_060635 VSP_060637"/>
    </isoform>
    <isoform>
        <id>A0A0K3AUE4-16</id>
        <name evidence="22">p</name>
        <sequence type="described" ref="VSP_060632"/>
    </isoform>
    <isoform>
        <id>A0A0K3AUE4-17</id>
        <name evidence="23">q</name>
        <sequence type="described" ref="VSP_060634 VSP_060637"/>
    </isoform>
    <isoform>
        <id>A0A0K3AUE4-18</id>
        <name evidence="24">r</name>
        <sequence type="described" ref="VSP_060634"/>
    </isoform>
    <isoform>
        <id>A0A0K3AUE4-19</id>
        <name evidence="25">s</name>
        <sequence type="described" ref="VSP_060633"/>
    </isoform>
</comment>
<comment type="tissue specificity">
    <text evidence="3">Expressed in seam cells, intestine cells, pharyngeal muscles and nerve ring neurons.</text>
</comment>
<comment type="developmental stage">
    <text evidence="3 4">In embryos, expressed in 20- to 30-cell stage and expression decreases after the 200-cell stage (PubMed:23666922). Expressed in seam cells, intestine cells, pharyngeal muscles and nerve ring neurons in L3 stage larvae and expression persists into adults (PubMed:21471153).</text>
</comment>
<comment type="domain">
    <text evidence="3">The Zinc finger domains 1 and 5 bind single-stranded and double-stranded RNAs (PubMed:21471153). The Zinc finger domain 1 binds DNA in vitro (PubMed:21471153).</text>
</comment>
<comment type="disruption phenotype">
    <text evidence="3 4">RNAi mediated knockdown at early larval stages and in young adults results in an extended lifespan (PubMed:21471153). RNAi-mediated knockdown results in delayed developmental defects with an increased number of seam cells in young adults (PubMed:21471153). RNAi-mediated knockdown suppresses the embryonic lethality of hermaphrodites in the double fox-1 y303 and sex-1 y263 mutant background (PubMed:23666922).</text>
</comment>
<keyword id="KW-0025">Alternative splicing</keyword>
<keyword id="KW-0963">Cytoplasm</keyword>
<keyword id="KW-0221">Differentiation</keyword>
<keyword id="KW-0238">DNA-binding</keyword>
<keyword id="KW-0479">Metal-binding</keyword>
<keyword id="KW-0539">Nucleus</keyword>
<keyword id="KW-1185">Reference proteome</keyword>
<keyword id="KW-0677">Repeat</keyword>
<keyword id="KW-0694">RNA-binding</keyword>
<keyword id="KW-0726">Sexual differentiation</keyword>
<keyword id="KW-0804">Transcription</keyword>
<keyword id="KW-0805">Transcription regulation</keyword>
<keyword id="KW-0810">Translation regulation</keyword>
<keyword id="KW-0862">Zinc</keyword>
<keyword id="KW-0863">Zinc-finger</keyword>
<proteinExistence type="evidence at protein level"/>
<reference evidence="6" key="1">
    <citation type="journal article" date="1998" name="Science">
        <title>Genome sequence of the nematode C. elegans: a platform for investigating biology.</title>
        <authorList>
            <consortium name="The C. elegans sequencing consortium"/>
        </authorList>
    </citation>
    <scope>NUCLEOTIDE SEQUENCE [LARGE SCALE GENOMIC DNA]</scope>
    <source>
        <strain evidence="6">Bristol N2</strain>
    </source>
</reference>
<reference evidence="5" key="2">
    <citation type="journal article" date="2011" name="Development">
        <title>The zinc-finger protein SEA-2 regulates larval developmental timing and adult lifespan in C. elegans.</title>
        <authorList>
            <person name="Huang X."/>
            <person name="Zhang H."/>
            <person name="Zhang H."/>
        </authorList>
    </citation>
    <scope>FUNCTION</scope>
    <scope>RNA-BINDING</scope>
    <scope>SUBCELLULAR LOCATION</scope>
    <scope>TISSUE SPECIFICITY</scope>
    <scope>DEVELOPMENTAL STAGE</scope>
    <scope>DOMAIN</scope>
    <scope>DISRUPTION PHENOTYPE</scope>
    <scope>MUTAGENESIS OF 415-CYS--CYS-435; ALA-1398; 415-CYS--CYS-418; 1670-CYS--CYS-1690 AND 1670-CYS--CYS-1673</scope>
</reference>
<reference evidence="5" key="3">
    <citation type="journal article" date="2013" name="Genes Dev.">
        <title>Molecular antagonism between X-chromosome and autosome signals determines nematode sex.</title>
        <authorList>
            <person name="Farboud B."/>
            <person name="Nix P."/>
            <person name="Jow M.M."/>
            <person name="Gladden J.M."/>
            <person name="Meyer B.J."/>
        </authorList>
    </citation>
    <scope>FUNCTION</scope>
    <scope>SUBCELLULAR LOCATION</scope>
    <scope>DEVELOPMENTAL STAGE</scope>
    <scope>DISRUPTION PHENOTYPE</scope>
</reference>
<accession>A0A0K3AUE4</accession>
<accession>A0A0K3AQV3</accession>
<accession>A0A0K3AR28</accession>
<accession>A0A0K3AR30</accession>
<accession>A0A0K3ARE6</accession>
<accession>A0A0K3ARN1</accession>
<accession>A0A0K3ARN6</accession>
<accession>A0A0K3AU01</accession>
<accession>A0A0K3AU05</accession>
<accession>A0A0K3AUM9</accession>
<accession>A0A0K3AUN5</accession>
<accession>A0A0K3AWR2</accession>
<accession>A0A0K3AWZ4</accession>
<accession>A0A0K3AX01</accession>
<accession>S6EZL2</accession>
<accession>S6F519</accession>
<accession>S6FCX8</accession>
<accession>S6FMY4</accession>
<accession>S6FWN6</accession>
<evidence type="ECO:0000255" key="1">
    <source>
        <dbReference type="PROSITE-ProRule" id="PRU00042"/>
    </source>
</evidence>
<evidence type="ECO:0000256" key="2">
    <source>
        <dbReference type="SAM" id="MobiDB-lite"/>
    </source>
</evidence>
<evidence type="ECO:0000269" key="3">
    <source>
    </source>
</evidence>
<evidence type="ECO:0000269" key="4">
    <source>
    </source>
</evidence>
<evidence type="ECO:0000305" key="5"/>
<evidence type="ECO:0000312" key="6">
    <source>
        <dbReference type="Proteomes" id="UP000001940"/>
    </source>
</evidence>
<evidence type="ECO:0000312" key="7">
    <source>
        <dbReference type="WormBase" id="K10G6.3a"/>
    </source>
</evidence>
<evidence type="ECO:0000312" key="8">
    <source>
        <dbReference type="WormBase" id="K10G6.3b"/>
    </source>
</evidence>
<evidence type="ECO:0000312" key="9">
    <source>
        <dbReference type="WormBase" id="K10G6.3c"/>
    </source>
</evidence>
<evidence type="ECO:0000312" key="10">
    <source>
        <dbReference type="WormBase" id="K10G6.3d"/>
    </source>
</evidence>
<evidence type="ECO:0000312" key="11">
    <source>
        <dbReference type="WormBase" id="K10G6.3e"/>
    </source>
</evidence>
<evidence type="ECO:0000312" key="12">
    <source>
        <dbReference type="WormBase" id="K10G6.3f"/>
    </source>
</evidence>
<evidence type="ECO:0000312" key="13">
    <source>
        <dbReference type="WormBase" id="K10G6.3g"/>
    </source>
</evidence>
<evidence type="ECO:0000312" key="14">
    <source>
        <dbReference type="WormBase" id="K10G6.3h"/>
    </source>
</evidence>
<evidence type="ECO:0000312" key="15">
    <source>
        <dbReference type="WormBase" id="K10G6.3i"/>
    </source>
</evidence>
<evidence type="ECO:0000312" key="16">
    <source>
        <dbReference type="WormBase" id="K10G6.3j"/>
    </source>
</evidence>
<evidence type="ECO:0000312" key="17">
    <source>
        <dbReference type="WormBase" id="K10G6.3k"/>
    </source>
</evidence>
<evidence type="ECO:0000312" key="18">
    <source>
        <dbReference type="WormBase" id="K10G6.3l"/>
    </source>
</evidence>
<evidence type="ECO:0000312" key="19">
    <source>
        <dbReference type="WormBase" id="K10G6.3m"/>
    </source>
</evidence>
<evidence type="ECO:0000312" key="20">
    <source>
        <dbReference type="WormBase" id="K10G6.3n"/>
    </source>
</evidence>
<evidence type="ECO:0000312" key="21">
    <source>
        <dbReference type="WormBase" id="K10G6.3o"/>
    </source>
</evidence>
<evidence type="ECO:0000312" key="22">
    <source>
        <dbReference type="WormBase" id="K10G6.3p"/>
    </source>
</evidence>
<evidence type="ECO:0000312" key="23">
    <source>
        <dbReference type="WormBase" id="K10G6.3q"/>
    </source>
</evidence>
<evidence type="ECO:0000312" key="24">
    <source>
        <dbReference type="WormBase" id="K10G6.3r"/>
    </source>
</evidence>
<evidence type="ECO:0000312" key="25">
    <source>
        <dbReference type="WormBase" id="K10G6.3s"/>
    </source>
</evidence>
<gene>
    <name evidence="13" type="primary">sea-2</name>
    <name evidence="13" type="ORF">K10G6.3</name>
</gene>
<organism evidence="6">
    <name type="scientific">Caenorhabditis elegans</name>
    <dbReference type="NCBI Taxonomy" id="6239"/>
    <lineage>
        <taxon>Eukaryota</taxon>
        <taxon>Metazoa</taxon>
        <taxon>Ecdysozoa</taxon>
        <taxon>Nematoda</taxon>
        <taxon>Chromadorea</taxon>
        <taxon>Rhabditida</taxon>
        <taxon>Rhabditina</taxon>
        <taxon>Rhabditomorpha</taxon>
        <taxon>Rhabditoidea</taxon>
        <taxon>Rhabditidae</taxon>
        <taxon>Peloderinae</taxon>
        <taxon>Caenorhabditis</taxon>
    </lineage>
</organism>
<feature type="chain" id="PRO_0000450520" description="Signal element on autosome protein 2">
    <location>
        <begin position="1"/>
        <end position="1968"/>
    </location>
</feature>
<feature type="zinc finger region" description="C2H2-type 1" evidence="1 3">
    <location>
        <begin position="413"/>
        <end position="440"/>
    </location>
</feature>
<feature type="zinc finger region" description="C2H2-type 2; degenerate" evidence="1 3">
    <location>
        <begin position="651"/>
        <end position="672"/>
    </location>
</feature>
<feature type="zinc finger region" description="C2H2-type 3; degenerate" evidence="1 3">
    <location>
        <begin position="856"/>
        <end position="875"/>
    </location>
</feature>
<feature type="zinc finger region" description="C2H2-type 4" evidence="1 3">
    <location>
        <begin position="1274"/>
        <end position="1297"/>
    </location>
</feature>
<feature type="zinc finger region" description="C2H2-type 5; degenerate" evidence="1 3">
    <location>
        <begin position="1668"/>
        <end position="1694"/>
    </location>
</feature>
<feature type="zinc finger region" description="C2H2-type 6" evidence="1">
    <location>
        <begin position="1826"/>
        <end position="1858"/>
    </location>
</feature>
<feature type="region of interest" description="Disordered" evidence="2">
    <location>
        <begin position="72"/>
        <end position="252"/>
    </location>
</feature>
<feature type="region of interest" description="Disordered" evidence="2">
    <location>
        <begin position="271"/>
        <end position="364"/>
    </location>
</feature>
<feature type="region of interest" description="Disordered" evidence="2">
    <location>
        <begin position="451"/>
        <end position="499"/>
    </location>
</feature>
<feature type="region of interest" description="Disordered" evidence="2">
    <location>
        <begin position="538"/>
        <end position="601"/>
    </location>
</feature>
<feature type="region of interest" description="Disordered" evidence="2">
    <location>
        <begin position="681"/>
        <end position="712"/>
    </location>
</feature>
<feature type="region of interest" description="Disordered" evidence="2">
    <location>
        <begin position="785"/>
        <end position="854"/>
    </location>
</feature>
<feature type="region of interest" description="Disordered" evidence="2">
    <location>
        <begin position="882"/>
        <end position="905"/>
    </location>
</feature>
<feature type="region of interest" description="Disordered" evidence="2">
    <location>
        <begin position="975"/>
        <end position="1069"/>
    </location>
</feature>
<feature type="region of interest" description="Disordered" evidence="2">
    <location>
        <begin position="1083"/>
        <end position="1227"/>
    </location>
</feature>
<feature type="region of interest" description="Disordered" evidence="2">
    <location>
        <begin position="1246"/>
        <end position="1273"/>
    </location>
</feature>
<feature type="region of interest" description="Disordered" evidence="2">
    <location>
        <begin position="1333"/>
        <end position="1478"/>
    </location>
</feature>
<feature type="region of interest" description="Disordered" evidence="2">
    <location>
        <begin position="1569"/>
        <end position="1608"/>
    </location>
</feature>
<feature type="region of interest" description="Disordered" evidence="2">
    <location>
        <begin position="1624"/>
        <end position="1671"/>
    </location>
</feature>
<feature type="region of interest" description="Disordered" evidence="2">
    <location>
        <begin position="1769"/>
        <end position="1822"/>
    </location>
</feature>
<feature type="compositionally biased region" description="Low complexity" evidence="2">
    <location>
        <begin position="72"/>
        <end position="88"/>
    </location>
</feature>
<feature type="compositionally biased region" description="Basic residues" evidence="2">
    <location>
        <begin position="107"/>
        <end position="119"/>
    </location>
</feature>
<feature type="compositionally biased region" description="Low complexity" evidence="2">
    <location>
        <begin position="120"/>
        <end position="134"/>
    </location>
</feature>
<feature type="compositionally biased region" description="Low complexity" evidence="2">
    <location>
        <begin position="144"/>
        <end position="165"/>
    </location>
</feature>
<feature type="compositionally biased region" description="Low complexity" evidence="2">
    <location>
        <begin position="219"/>
        <end position="232"/>
    </location>
</feature>
<feature type="compositionally biased region" description="Low complexity" evidence="2">
    <location>
        <begin position="298"/>
        <end position="338"/>
    </location>
</feature>
<feature type="compositionally biased region" description="Polar residues" evidence="2">
    <location>
        <begin position="346"/>
        <end position="362"/>
    </location>
</feature>
<feature type="compositionally biased region" description="Pro residues" evidence="2">
    <location>
        <begin position="452"/>
        <end position="467"/>
    </location>
</feature>
<feature type="compositionally biased region" description="Polar residues" evidence="2">
    <location>
        <begin position="472"/>
        <end position="482"/>
    </location>
</feature>
<feature type="compositionally biased region" description="Low complexity" evidence="2">
    <location>
        <begin position="483"/>
        <end position="498"/>
    </location>
</feature>
<feature type="compositionally biased region" description="Basic and acidic residues" evidence="2">
    <location>
        <begin position="570"/>
        <end position="594"/>
    </location>
</feature>
<feature type="compositionally biased region" description="Basic residues" evidence="2">
    <location>
        <begin position="690"/>
        <end position="702"/>
    </location>
</feature>
<feature type="compositionally biased region" description="Low complexity" evidence="2">
    <location>
        <begin position="794"/>
        <end position="804"/>
    </location>
</feature>
<feature type="compositionally biased region" description="Acidic residues" evidence="2">
    <location>
        <begin position="812"/>
        <end position="824"/>
    </location>
</feature>
<feature type="compositionally biased region" description="Low complexity" evidence="2">
    <location>
        <begin position="827"/>
        <end position="851"/>
    </location>
</feature>
<feature type="compositionally biased region" description="Low complexity" evidence="2">
    <location>
        <begin position="981"/>
        <end position="1015"/>
    </location>
</feature>
<feature type="compositionally biased region" description="Low complexity" evidence="2">
    <location>
        <begin position="1023"/>
        <end position="1046"/>
    </location>
</feature>
<feature type="compositionally biased region" description="Low complexity" evidence="2">
    <location>
        <begin position="1108"/>
        <end position="1131"/>
    </location>
</feature>
<feature type="compositionally biased region" description="Pro residues" evidence="2">
    <location>
        <begin position="1136"/>
        <end position="1146"/>
    </location>
</feature>
<feature type="compositionally biased region" description="Low complexity" evidence="2">
    <location>
        <begin position="1147"/>
        <end position="1185"/>
    </location>
</feature>
<feature type="compositionally biased region" description="Polar residues" evidence="2">
    <location>
        <begin position="1201"/>
        <end position="1211"/>
    </location>
</feature>
<feature type="compositionally biased region" description="Polar residues" evidence="2">
    <location>
        <begin position="1251"/>
        <end position="1273"/>
    </location>
</feature>
<feature type="compositionally biased region" description="Basic and acidic residues" evidence="2">
    <location>
        <begin position="1388"/>
        <end position="1403"/>
    </location>
</feature>
<feature type="compositionally biased region" description="Pro residues" evidence="2">
    <location>
        <begin position="1407"/>
        <end position="1421"/>
    </location>
</feature>
<feature type="compositionally biased region" description="Pro residues" evidence="2">
    <location>
        <begin position="1429"/>
        <end position="1445"/>
    </location>
</feature>
<feature type="compositionally biased region" description="Low complexity" evidence="2">
    <location>
        <begin position="1589"/>
        <end position="1608"/>
    </location>
</feature>
<feature type="compositionally biased region" description="Polar residues" evidence="2">
    <location>
        <begin position="1624"/>
        <end position="1633"/>
    </location>
</feature>
<feature type="compositionally biased region" description="Low complexity" evidence="2">
    <location>
        <begin position="1800"/>
        <end position="1811"/>
    </location>
</feature>
<feature type="splice variant" id="VSP_060632" description="In isoform p." evidence="5">
    <location>
        <begin position="1"/>
        <end position="1852"/>
    </location>
</feature>
<feature type="splice variant" id="VSP_060633" description="In isoform e and isoform s." evidence="5">
    <location>
        <begin position="1"/>
        <end position="867"/>
    </location>
</feature>
<feature type="splice variant" id="VSP_060634" description="In isoform d, isoform m, isoform q and isoform r." evidence="5">
    <location>
        <begin position="1"/>
        <end position="338"/>
    </location>
</feature>
<feature type="splice variant" id="VSP_060635" description="In isoform k, isoform l, isoform n and isoform o." evidence="5">
    <location>
        <begin position="1"/>
        <end position="176"/>
    </location>
</feature>
<feature type="splice variant" id="VSP_060636" description="In isoform a, isoform b, isoform c and isoform j." evidence="5">
    <location>
        <begin position="1"/>
        <end position="96"/>
    </location>
</feature>
<feature type="splice variant" id="VSP_060637" description="In isoform b, isoform h, isoform i, isoform j, isoform l, isoform m, isoform o and isoform q." evidence="5">
    <location>
        <begin position="687"/>
        <end position="831"/>
    </location>
</feature>
<feature type="splice variant" id="VSP_060638" description="In isoform c, isoform d, isoform e, isoform f, isoform h, isoform j, isoform k, isoform l and isoform m." evidence="5">
    <original>GAKPSTNQAR</original>
    <variation>VSGMRQELLQ</variation>
    <location>
        <begin position="1816"/>
        <end position="1825"/>
    </location>
</feature>
<feature type="splice variant" id="VSP_060639" description="In isoform b." evidence="5">
    <location>
        <begin position="1823"/>
        <end position="1828"/>
    </location>
</feature>
<feature type="splice variant" id="VSP_060640" description="In isoform c, isoform d, isoform e, isoform f, isoform h, isoform j, isoform k, isoform l and isoform m." evidence="5">
    <location>
        <begin position="1826"/>
        <end position="1968"/>
    </location>
</feature>
<feature type="mutagenesis site" description="Does not affect expression pattern. Does not rescue the seam developmental timing defects of the sea-2 b283 mutant." evidence="3">
    <location>
        <begin position="415"/>
        <end position="435"/>
    </location>
</feature>
<feature type="mutagenesis site" description="Abolishes RNA-binding." evidence="3">
    <original>CPNC</original>
    <variation>SPNS</variation>
    <location>
        <begin position="415"/>
        <end position="418"/>
    </location>
</feature>
<feature type="mutagenesis site" description="In bp283; extended lifespan, and a slow accumulation of dcap-1-positive P-bodies compared to wild-type, indicative of a slower ageing rate. Delays the L2 to L3 larval stage switch. Defective seam cell development due to delayed divisions and failed fusions during the L2 and L3 larval stages. This increases the number of seam cells at later larval stages and delays their terminal differentiation, resulting in discontinuous alae formation. Ectopic expression of the heterochronic protein lin-28 whereby, in contrast to wild-type, lin-28 is expressed in the head, tail and in seam cells of L3 and L4 larvae. Prominent nuclear localization of the transcription factor daf-16 in the intestine resulting in the transcription of daf-16 targets. The seam cell development defects are enhanced in a daf-2 e1370 mutant background. The seam cell development defects are suppressed in a lin-28 n719 mutant background. Partially suppresses the premature alae formation defect in a hbl-1 RNAi mutant background. Suppresses the embryonic lethality of hermaphrodites in the double fox-1 and sex-1 RNAi mutant background." evidence="3">
    <original>A</original>
    <variation>D</variation>
    <location>
        <position position="1398"/>
    </location>
</feature>
<feature type="mutagenesis site" description="Does not affect expression pattern. Does not rescue the seam cell developmental timing defects of the sea-2 bp283 mutant." evidence="3">
    <location>
        <begin position="1670"/>
        <end position="1690"/>
    </location>
</feature>
<feature type="mutagenesis site" description="Abolishes RNA-binding." evidence="3">
    <original>CSGC</original>
    <variation>SSGS</variation>
    <location>
        <begin position="1670"/>
        <end position="1673"/>
    </location>
</feature>
<sequence length="1968" mass="215234">MGREYKFTGIAAKLNPLNCRLKLEIAEDLDERVPTTSTSCSVASVAAATATINTTAPTVLTKSELQKTLQKTSSSFSSSLATTTTTSSHLNAPVESMEGHSSLASYSHHHPSSSHHHHPGQQQSSSSSSSSHLQDFQSPPSASHPYYHQQQPQHQHQQAQQYGQATGSTNGGGQQQMTSMYGGNDYDQHQLHHQNQQHQASTSTQQFHHPQRPPPPQYDQPSSSTGSSLPPLHTVRYEQLPPPPSNQRTPTQQLQYPVKVVEAGGQAYAQQVQQAQQSNRSGAAGVNSALQPKPLPPLSSITSISSSAAGSSISAPSTSQPSTTSSLITSPPSTSSSSMAPRKTPPNASSSSLIKRQSQDVQEQQRVDFEVARNVSQIMSKNGLKVMHEPLLTGSLPQLAPLAPLPPPKSGVYQCPNCNRNLANARNLQRHRQTCGSAQHAAPQLAAMLQRSPPPCASAPPVAPPTAPSTSFQHHNSTGNLTLSYSSSSSRHQSSLYSPQLEHQDLVGNPNVMLSDGYEYKDDPMLYQGPSGLSDSIWSRDDSFHSEPPSASHDQLDMDHLGFPDPLQDPLHHLDSFDSADHRKETPRECHEPDELMTLDPTPPQCGSERFYGINIDDMPLSLDCDEPLMRSESASLSSSSQGRNTPAAVFTCEACKKSVSSERSLRRHYNTCKMFQTELAASGEERPPTTKRKPATKRPSKKKEASEGPEKNSAILAALRKEPAAPQQPQQLQFQQNYQPSPQFQAPYGGGSLPSISASWLHSASTSAAAAAPERSEMFTSPIVTSAPNPYIHQLPHQQPQQQKSSPLEDLLNEQDESADDDGDSRSSSGTVSNSTTTTTTATTTSSKSTGNPLFTCEHCARQLCSMSNLKRHRATCKVAASSSSNSAASRPPSQPSTPATAPATPMLQASQAPQPLQAPPQSPMETTATVTYTKTTVPPSVANTWNTEKAQLISPKPRSQTIFSEASSSMTVGDALRAQQHQQKMDQQIQIQFQQQQQQRFQHHQQQQQAGRIPPRPPNPILNQVQNPPQQVQHNQHQNQMLNPIRQPLLQSPPPPPPKKGLIEHKNTDLVLITSEPLAERMDAKRRSSEGLVAVTSTPLPPIQLPQRSQAPAPSRQQQQQPPVAYQVQFNGRPLPPMQLPPLQNPHNQQQQHQMLHQSQMNYQQVQQVQQVQHVQQQQNLQNQHHHQQQHHQQNQQQAPGNRSRSHSNVGKMEQEAQRQGSPLDSIITSVPLSIEVHHHIMKPGPLEQGQSSVDSQSTAEPSPRKASQQAYICPECKKTYASRKNVKRHRMAVHKLTLDEILANPEQPALDPLSAVGGAGRRHTVAGLETPDSALKPAPTKRKASEAPSAGVATKKGKAMAASVDEIQVKEEEEDQKEETVGSVERQEPPKKPVADDHKSAIAPLPPANTIMPPPPPYNQASAVPLNPPRTALPPLQLPPLQPLQSESPSWASMSAPPTALIPRTPRSSEFADEEDTRAMAKIAAELKRSAEDWPVLAVIEGVAAEPTNGEDIDEDEILIKRLRQGGVLEDVGDVSDLLRDVQGGVDGEPFSEDMLLEKNLSTASSVGLPSLASPGEQFGYQQYSQHPQQHPQQHPQQHPQQQQQVWNPNYEFQGYMQQQHPPMPVSQQFQQPLLQRPASQPPPARPIVKNSRRPSTTPKPPPNLTCSGCKKILGSDYSLRRHRAGCADVQQALNPEYPRPPKRKAAREAQKINEAEILASMPDPQMVAERSAAVAEAAAAEAAVERIGALPPPSVVHEIVHQVNADRQSMKKHNKTTSPPPAQEAPPTCAPDDPMSSSSSSSTSSASPLQGGAKPSTNQARHYCQFPECGKNFSSEWNLARHTRESCKMTTRAHSYEPTSAADKIDLIFMDKSKRRVSRTFLCTVSSLISYWLGEQGDRLELDTKWEHFQLLLDVHTLKVAITADNINLIAEQSKKYQLEHVIRMADQFMMNTNYTTPPTHVQL</sequence>
<dbReference type="EMBL" id="BX284602">
    <property type="protein sequence ID" value="CDG24088.1"/>
    <property type="molecule type" value="Genomic_DNA"/>
</dbReference>
<dbReference type="EMBL" id="BX284602">
    <property type="protein sequence ID" value="CDG24089.1"/>
    <property type="molecule type" value="Genomic_DNA"/>
</dbReference>
<dbReference type="EMBL" id="BX284602">
    <property type="protein sequence ID" value="CDG24090.1"/>
    <property type="molecule type" value="Genomic_DNA"/>
</dbReference>
<dbReference type="EMBL" id="BX284602">
    <property type="protein sequence ID" value="CDG24091.1"/>
    <property type="molecule type" value="Genomic_DNA"/>
</dbReference>
<dbReference type="EMBL" id="BX284602">
    <property type="protein sequence ID" value="CDG24092.1"/>
    <property type="molecule type" value="Genomic_DNA"/>
</dbReference>
<dbReference type="EMBL" id="BX284602">
    <property type="protein sequence ID" value="CTQ86419.1"/>
    <property type="molecule type" value="Genomic_DNA"/>
</dbReference>
<dbReference type="EMBL" id="BX284602">
    <property type="protein sequence ID" value="CTQ86420.1"/>
    <property type="molecule type" value="Genomic_DNA"/>
</dbReference>
<dbReference type="EMBL" id="BX284602">
    <property type="protein sequence ID" value="CTQ86421.1"/>
    <property type="molecule type" value="Genomic_DNA"/>
</dbReference>
<dbReference type="EMBL" id="BX284602">
    <property type="protein sequence ID" value="CTQ86422.1"/>
    <property type="molecule type" value="Genomic_DNA"/>
</dbReference>
<dbReference type="EMBL" id="BX284602">
    <property type="protein sequence ID" value="CTQ86503.1"/>
    <property type="molecule type" value="Genomic_DNA"/>
</dbReference>
<dbReference type="EMBL" id="BX284602">
    <property type="protein sequence ID" value="CTQ86504.1"/>
    <property type="molecule type" value="Genomic_DNA"/>
</dbReference>
<dbReference type="EMBL" id="BX284602">
    <property type="protein sequence ID" value="CTQ86505.1"/>
    <property type="molecule type" value="Genomic_DNA"/>
</dbReference>
<dbReference type="EMBL" id="BX284602">
    <property type="protein sequence ID" value="CTQ86506.1"/>
    <property type="molecule type" value="Genomic_DNA"/>
</dbReference>
<dbReference type="EMBL" id="BX284602">
    <property type="protein sequence ID" value="CTQ86507.1"/>
    <property type="molecule type" value="Genomic_DNA"/>
</dbReference>
<dbReference type="EMBL" id="BX284602">
    <property type="protein sequence ID" value="CTQ86508.1"/>
    <property type="molecule type" value="Genomic_DNA"/>
</dbReference>
<dbReference type="EMBL" id="BX284602">
    <property type="protein sequence ID" value="CTQ86509.1"/>
    <property type="molecule type" value="Genomic_DNA"/>
</dbReference>
<dbReference type="EMBL" id="BX284602">
    <property type="protein sequence ID" value="CTQ86510.1"/>
    <property type="molecule type" value="Genomic_DNA"/>
</dbReference>
<dbReference type="EMBL" id="BX284602">
    <property type="protein sequence ID" value="CTQ86511.1"/>
    <property type="molecule type" value="Genomic_DNA"/>
</dbReference>
<dbReference type="EMBL" id="BX284602">
    <property type="protein sequence ID" value="CTQ86512.1"/>
    <property type="molecule type" value="Genomic_DNA"/>
</dbReference>
<dbReference type="RefSeq" id="NP_001293473.1">
    <molecule id="A0A0K3AUE4-2"/>
    <property type="nucleotide sequence ID" value="NM_001306544.2"/>
</dbReference>
<dbReference type="RefSeq" id="NP_001293474.1">
    <molecule id="A0A0K3AUE4-3"/>
    <property type="nucleotide sequence ID" value="NM_001306545.3"/>
</dbReference>
<dbReference type="RefSeq" id="NP_001293475.1">
    <molecule id="A0A0K3AUE4-4"/>
    <property type="nucleotide sequence ID" value="NM_001306546.2"/>
</dbReference>
<dbReference type="RefSeq" id="NP_001293476.1">
    <property type="nucleotide sequence ID" value="NM_001306547.1"/>
</dbReference>
<dbReference type="RefSeq" id="NP_001293477.1">
    <property type="nucleotide sequence ID" value="NM_001306548.1"/>
</dbReference>
<dbReference type="RefSeq" id="NP_001300480.1">
    <property type="nucleotide sequence ID" value="NM_001313551.1"/>
</dbReference>
<dbReference type="RefSeq" id="NP_001300481.1">
    <property type="nucleotide sequence ID" value="NM_001313552.1"/>
</dbReference>
<dbReference type="RefSeq" id="NP_001300482.1">
    <property type="nucleotide sequence ID" value="NM_001313553.1"/>
</dbReference>
<dbReference type="RefSeq" id="NP_001300483.1">
    <property type="nucleotide sequence ID" value="NM_001313554.1"/>
</dbReference>
<dbReference type="RefSeq" id="NP_001300564.1">
    <property type="nucleotide sequence ID" value="NM_001313635.1"/>
</dbReference>
<dbReference type="RefSeq" id="NP_001300565.1">
    <property type="nucleotide sequence ID" value="NM_001313636.1"/>
</dbReference>
<dbReference type="RefSeq" id="NP_001300566.1">
    <property type="nucleotide sequence ID" value="NM_001313637.1"/>
</dbReference>
<dbReference type="RefSeq" id="NP_001300567.1">
    <property type="nucleotide sequence ID" value="NM_001313638.1"/>
</dbReference>
<dbReference type="RefSeq" id="NP_001300568.1">
    <molecule id="A0A0K3AUE4-14"/>
    <property type="nucleotide sequence ID" value="NM_001313639.3"/>
</dbReference>
<dbReference type="RefSeq" id="NP_001300569.1">
    <molecule id="A0A0K3AUE4-15"/>
    <property type="nucleotide sequence ID" value="NM_001313640.3"/>
</dbReference>
<dbReference type="RefSeq" id="NP_001300570.1">
    <molecule id="A0A0K3AUE4-16"/>
    <property type="nucleotide sequence ID" value="NM_001313641.3"/>
</dbReference>
<dbReference type="RefSeq" id="NP_001300571.1">
    <molecule id="A0A0K3AUE4-17"/>
    <property type="nucleotide sequence ID" value="NM_001313642.3"/>
</dbReference>
<dbReference type="RefSeq" id="NP_001300572.1">
    <molecule id="A0A0K3AUE4-18"/>
    <property type="nucleotide sequence ID" value="NM_001313643.3"/>
</dbReference>
<dbReference type="RefSeq" id="NP_001300573.1">
    <molecule id="A0A0K3AUE4-19"/>
    <property type="nucleotide sequence ID" value="NM_001313644.3"/>
</dbReference>
<dbReference type="RefSeq" id="NP_001364835.1">
    <molecule id="A0A0K3AUE4-7"/>
    <property type="nucleotide sequence ID" value="NM_001377774.1"/>
</dbReference>
<dbReference type="RefSeq" id="NP_001364836.1">
    <molecule id="A0A0K3AUE4-1"/>
    <property type="nucleotide sequence ID" value="NM_001377772.3"/>
</dbReference>
<dbReference type="RefSeq" id="NP_001364838.1">
    <molecule id="A0A0K3AUE4-9"/>
    <property type="nucleotide sequence ID" value="NM_001377773.3"/>
</dbReference>
<dbReference type="RefSeq" id="NP_001368182.1">
    <molecule id="A0A0K3AUE4-5"/>
    <property type="nucleotide sequence ID" value="NM_001381378.1"/>
</dbReference>
<dbReference type="RefSeq" id="NP_001368183.1">
    <molecule id="A0A0K3AUE4-6"/>
    <property type="nucleotide sequence ID" value="NM_001381380.1"/>
</dbReference>
<dbReference type="RefSeq" id="NP_001368506.1">
    <molecule id="A0A0K3AUE4-8"/>
    <property type="nucleotide sequence ID" value="NM_001381374.1"/>
</dbReference>
<dbReference type="RefSeq" id="NP_001368517.1">
    <molecule id="A0A0K3AUE4-10"/>
    <property type="nucleotide sequence ID" value="NM_001381375.1"/>
</dbReference>
<dbReference type="RefSeq" id="NP_001368518.1">
    <molecule id="A0A0K3AUE4-11"/>
    <property type="nucleotide sequence ID" value="NM_001381376.1"/>
</dbReference>
<dbReference type="RefSeq" id="NP_001368519.1">
    <molecule id="A0A0K3AUE4-12"/>
    <property type="nucleotide sequence ID" value="NM_001381377.1"/>
</dbReference>
<dbReference type="RefSeq" id="NP_001368520.1">
    <molecule id="A0A0K3AUE4-13"/>
    <property type="nucleotide sequence ID" value="NM_001381379.1"/>
</dbReference>
<dbReference type="SMR" id="A0A0K3AUE4"/>
<dbReference type="FunCoup" id="A0A0K3AUE4">
    <property type="interactions" value="144"/>
</dbReference>
<dbReference type="STRING" id="6239.K10G6.3g.1"/>
<dbReference type="PaxDb" id="6239-K10G6.3a"/>
<dbReference type="EnsemblMetazoa" id="K10G6.3a.1">
    <molecule id="A0A0K3AUE4-2"/>
    <property type="protein sequence ID" value="K10G6.3a.1"/>
    <property type="gene ID" value="WBGene00004751"/>
</dbReference>
<dbReference type="EnsemblMetazoa" id="K10G6.3b.1">
    <molecule id="A0A0K3AUE4-3"/>
    <property type="protein sequence ID" value="K10G6.3b.1"/>
    <property type="gene ID" value="WBGene00004751"/>
</dbReference>
<dbReference type="EnsemblMetazoa" id="K10G6.3c.1">
    <molecule id="A0A0K3AUE4-4"/>
    <property type="protein sequence ID" value="K10G6.3c.1"/>
    <property type="gene ID" value="WBGene00004751"/>
</dbReference>
<dbReference type="EnsemblMetazoa" id="K10G6.3d.1">
    <molecule id="A0A0K3AUE4-5"/>
    <property type="protein sequence ID" value="K10G6.3d.1"/>
    <property type="gene ID" value="WBGene00004751"/>
</dbReference>
<dbReference type="EnsemblMetazoa" id="K10G6.3e.1">
    <molecule id="A0A0K3AUE4-6"/>
    <property type="protein sequence ID" value="K10G6.3e.1"/>
    <property type="gene ID" value="WBGene00004751"/>
</dbReference>
<dbReference type="EnsemblMetazoa" id="K10G6.3f.1">
    <molecule id="A0A0K3AUE4-7"/>
    <property type="protein sequence ID" value="K10G6.3f.1"/>
    <property type="gene ID" value="WBGene00004751"/>
</dbReference>
<dbReference type="EnsemblMetazoa" id="K10G6.3g.1">
    <molecule id="A0A0K3AUE4-1"/>
    <property type="protein sequence ID" value="K10G6.3g.1"/>
    <property type="gene ID" value="WBGene00004751"/>
</dbReference>
<dbReference type="EnsemblMetazoa" id="K10G6.3h.1">
    <molecule id="A0A0K3AUE4-8"/>
    <property type="protein sequence ID" value="K10G6.3h.1"/>
    <property type="gene ID" value="WBGene00004751"/>
</dbReference>
<dbReference type="EnsemblMetazoa" id="K10G6.3i.1">
    <molecule id="A0A0K3AUE4-9"/>
    <property type="protein sequence ID" value="K10G6.3i.1"/>
    <property type="gene ID" value="WBGene00004751"/>
</dbReference>
<dbReference type="EnsemblMetazoa" id="K10G6.3j.1">
    <molecule id="A0A0K3AUE4-10"/>
    <property type="protein sequence ID" value="K10G6.3j.1"/>
    <property type="gene ID" value="WBGene00004751"/>
</dbReference>
<dbReference type="EnsemblMetazoa" id="K10G6.3k.1">
    <molecule id="A0A0K3AUE4-11"/>
    <property type="protein sequence ID" value="K10G6.3k.1"/>
    <property type="gene ID" value="WBGene00004751"/>
</dbReference>
<dbReference type="EnsemblMetazoa" id="K10G6.3l.1">
    <molecule id="A0A0K3AUE4-12"/>
    <property type="protein sequence ID" value="K10G6.3l.1"/>
    <property type="gene ID" value="WBGene00004751"/>
</dbReference>
<dbReference type="EnsemblMetazoa" id="K10G6.3m.1">
    <molecule id="A0A0K3AUE4-13"/>
    <property type="protein sequence ID" value="K10G6.3m.1"/>
    <property type="gene ID" value="WBGene00004751"/>
</dbReference>
<dbReference type="EnsemblMetazoa" id="K10G6.3n.1">
    <molecule id="A0A0K3AUE4-14"/>
    <property type="protein sequence ID" value="K10G6.3n.1"/>
    <property type="gene ID" value="WBGene00004751"/>
</dbReference>
<dbReference type="EnsemblMetazoa" id="K10G6.3o.1">
    <molecule id="A0A0K3AUE4-15"/>
    <property type="protein sequence ID" value="K10G6.3o.1"/>
    <property type="gene ID" value="WBGene00004751"/>
</dbReference>
<dbReference type="EnsemblMetazoa" id="K10G6.3p.1">
    <molecule id="A0A0K3AUE4-16"/>
    <property type="protein sequence ID" value="K10G6.3p.1"/>
    <property type="gene ID" value="WBGene00004751"/>
</dbReference>
<dbReference type="EnsemblMetazoa" id="K10G6.3q.1">
    <molecule id="A0A0K3AUE4-17"/>
    <property type="protein sequence ID" value="K10G6.3q.1"/>
    <property type="gene ID" value="WBGene00004751"/>
</dbReference>
<dbReference type="EnsemblMetazoa" id="K10G6.3r.1">
    <molecule id="A0A0K3AUE4-18"/>
    <property type="protein sequence ID" value="K10G6.3r.1"/>
    <property type="gene ID" value="WBGene00004751"/>
</dbReference>
<dbReference type="EnsemblMetazoa" id="K10G6.3s.1">
    <molecule id="A0A0K3AUE4-19"/>
    <property type="protein sequence ID" value="K10G6.3s.1"/>
    <property type="gene ID" value="WBGene00004751"/>
</dbReference>
<dbReference type="GeneID" id="173738"/>
<dbReference type="KEGG" id="cel:CELE_K10G6.3"/>
<dbReference type="AGR" id="WB:WBGene00004751"/>
<dbReference type="CTD" id="173738"/>
<dbReference type="WormBase" id="K10G6.3a">
    <molecule id="A0A0K3AUE4-2"/>
    <property type="protein sequence ID" value="CE48445"/>
    <property type="gene ID" value="WBGene00004751"/>
    <property type="gene designation" value="sea-2"/>
</dbReference>
<dbReference type="WormBase" id="K10G6.3b">
    <molecule id="A0A0K3AUE4-3"/>
    <property type="protein sequence ID" value="CE48490"/>
    <property type="gene ID" value="WBGene00004751"/>
    <property type="gene designation" value="sea-2"/>
</dbReference>
<dbReference type="WormBase" id="K10G6.3c">
    <molecule id="A0A0K3AUE4-4"/>
    <property type="protein sequence ID" value="CE48485"/>
    <property type="gene ID" value="WBGene00004751"/>
    <property type="gene designation" value="sea-2"/>
</dbReference>
<dbReference type="WormBase" id="K10G6.3d">
    <molecule id="A0A0K3AUE4-5"/>
    <property type="protein sequence ID" value="CE48423"/>
    <property type="gene ID" value="WBGene00004751"/>
    <property type="gene designation" value="sea-2"/>
</dbReference>
<dbReference type="WormBase" id="K10G6.3e">
    <molecule id="A0A0K3AUE4-6"/>
    <property type="protein sequence ID" value="CE48457"/>
    <property type="gene ID" value="WBGene00004751"/>
    <property type="gene designation" value="sea-2"/>
</dbReference>
<dbReference type="WormBase" id="K10G6.3f">
    <molecule id="A0A0K3AUE4-7"/>
    <property type="protein sequence ID" value="CE50430"/>
    <property type="gene ID" value="WBGene00004751"/>
    <property type="gene designation" value="sea-2"/>
</dbReference>
<dbReference type="WormBase" id="K10G6.3g">
    <molecule id="A0A0K3AUE4-1"/>
    <property type="protein sequence ID" value="CE50510"/>
    <property type="gene ID" value="WBGene00004751"/>
    <property type="gene designation" value="sea-2"/>
</dbReference>
<dbReference type="WormBase" id="K10G6.3h">
    <molecule id="A0A0K3AUE4-8"/>
    <property type="protein sequence ID" value="CE50366"/>
    <property type="gene ID" value="WBGene00004751"/>
    <property type="gene designation" value="sea-2"/>
</dbReference>
<dbReference type="WormBase" id="K10G6.3i">
    <molecule id="A0A0K3AUE4-9"/>
    <property type="protein sequence ID" value="CE50351"/>
    <property type="gene ID" value="WBGene00004751"/>
    <property type="gene designation" value="sea-2"/>
</dbReference>
<dbReference type="WormBase" id="K10G6.3j">
    <molecule id="A0A0K3AUE4-10"/>
    <property type="protein sequence ID" value="CE50480"/>
    <property type="gene ID" value="WBGene00004751"/>
    <property type="gene designation" value="sea-2"/>
</dbReference>
<dbReference type="WormBase" id="K10G6.3k">
    <molecule id="A0A0K3AUE4-11"/>
    <property type="protein sequence ID" value="CE50440"/>
    <property type="gene ID" value="WBGene00004751"/>
    <property type="gene designation" value="sea-2"/>
</dbReference>
<dbReference type="WormBase" id="K10G6.3l">
    <molecule id="A0A0K3AUE4-12"/>
    <property type="protein sequence ID" value="CE50418"/>
    <property type="gene ID" value="WBGene00004751"/>
    <property type="gene designation" value="sea-2"/>
</dbReference>
<dbReference type="WormBase" id="K10G6.3m">
    <molecule id="A0A0K3AUE4-13"/>
    <property type="protein sequence ID" value="CE50371"/>
    <property type="gene ID" value="WBGene00004751"/>
    <property type="gene designation" value="sea-2"/>
</dbReference>
<dbReference type="WormBase" id="K10G6.3n">
    <molecule id="A0A0K3AUE4-14"/>
    <property type="protein sequence ID" value="CE50513"/>
    <property type="gene ID" value="WBGene00004751"/>
    <property type="gene designation" value="sea-2"/>
</dbReference>
<dbReference type="WormBase" id="K10G6.3o">
    <molecule id="A0A0K3AUE4-15"/>
    <property type="protein sequence ID" value="CE50457"/>
    <property type="gene ID" value="WBGene00004751"/>
    <property type="gene designation" value="sea-2"/>
</dbReference>
<dbReference type="WormBase" id="K10G6.3p">
    <molecule id="A0A0K3AUE4-16"/>
    <property type="protein sequence ID" value="CE50344"/>
    <property type="gene ID" value="WBGene00004751"/>
    <property type="gene designation" value="sea-2"/>
</dbReference>
<dbReference type="WormBase" id="K10G6.3q">
    <molecule id="A0A0K3AUE4-17"/>
    <property type="protein sequence ID" value="CE50395"/>
    <property type="gene ID" value="WBGene00004751"/>
    <property type="gene designation" value="sea-2"/>
</dbReference>
<dbReference type="WormBase" id="K10G6.3r">
    <molecule id="A0A0K3AUE4-18"/>
    <property type="protein sequence ID" value="CE50350"/>
    <property type="gene ID" value="WBGene00004751"/>
    <property type="gene designation" value="sea-2"/>
</dbReference>
<dbReference type="WormBase" id="K10G6.3s">
    <molecule id="A0A0K3AUE4-19"/>
    <property type="protein sequence ID" value="CE50483"/>
    <property type="gene ID" value="WBGene00004751"/>
    <property type="gene designation" value="sea-2"/>
</dbReference>
<dbReference type="eggNOG" id="ENOG502SG5U">
    <property type="taxonomic scope" value="Eukaryota"/>
</dbReference>
<dbReference type="HOGENOM" id="CLU_240032_0_0_1"/>
<dbReference type="InParanoid" id="A0A0K3AUE4"/>
<dbReference type="OMA" id="PANTIMP"/>
<dbReference type="OrthoDB" id="5877915at2759"/>
<dbReference type="PRO" id="PR:A0A0K3AUE4"/>
<dbReference type="Proteomes" id="UP000001940">
    <property type="component" value="Chromosome II"/>
</dbReference>
<dbReference type="Bgee" id="WBGene00004751">
    <property type="expression patterns" value="Expressed in embryo and 4 other cell types or tissues"/>
</dbReference>
<dbReference type="ExpressionAtlas" id="A0A0K3AUE4">
    <property type="expression patterns" value="baseline and differential"/>
</dbReference>
<dbReference type="GO" id="GO:0005737">
    <property type="term" value="C:cytoplasm"/>
    <property type="evidence" value="ECO:0000314"/>
    <property type="project" value="WormBase"/>
</dbReference>
<dbReference type="GO" id="GO:0016592">
    <property type="term" value="C:mediator complex"/>
    <property type="evidence" value="ECO:0000318"/>
    <property type="project" value="GO_Central"/>
</dbReference>
<dbReference type="GO" id="GO:0005634">
    <property type="term" value="C:nucleus"/>
    <property type="evidence" value="ECO:0000314"/>
    <property type="project" value="WormBase"/>
</dbReference>
<dbReference type="GO" id="GO:0003677">
    <property type="term" value="F:DNA binding"/>
    <property type="evidence" value="ECO:0007669"/>
    <property type="project" value="UniProtKB-KW"/>
</dbReference>
<dbReference type="GO" id="GO:0003725">
    <property type="term" value="F:double-stranded RNA binding"/>
    <property type="evidence" value="ECO:0000314"/>
    <property type="project" value="WormBase"/>
</dbReference>
<dbReference type="GO" id="GO:0003727">
    <property type="term" value="F:single-stranded RNA binding"/>
    <property type="evidence" value="ECO:0000314"/>
    <property type="project" value="WormBase"/>
</dbReference>
<dbReference type="GO" id="GO:0003713">
    <property type="term" value="F:transcription coactivator activity"/>
    <property type="evidence" value="ECO:0000318"/>
    <property type="project" value="GO_Central"/>
</dbReference>
<dbReference type="GO" id="GO:0008270">
    <property type="term" value="F:zinc ion binding"/>
    <property type="evidence" value="ECO:0007669"/>
    <property type="project" value="UniProtKB-KW"/>
</dbReference>
<dbReference type="GO" id="GO:0030154">
    <property type="term" value="P:cell differentiation"/>
    <property type="evidence" value="ECO:0007669"/>
    <property type="project" value="UniProtKB-KW"/>
</dbReference>
<dbReference type="GO" id="GO:0008340">
    <property type="term" value="P:determination of adult lifespan"/>
    <property type="evidence" value="ECO:0000315"/>
    <property type="project" value="WormBase"/>
</dbReference>
<dbReference type="GO" id="GO:0010629">
    <property type="term" value="P:negative regulation of gene expression"/>
    <property type="evidence" value="ECO:0000315"/>
    <property type="project" value="WormBase"/>
</dbReference>
<dbReference type="GO" id="GO:0045944">
    <property type="term" value="P:positive regulation of transcription by RNA polymerase II"/>
    <property type="evidence" value="ECO:0000318"/>
    <property type="project" value="GO_Central"/>
</dbReference>
<dbReference type="GO" id="GO:0040034">
    <property type="term" value="P:regulation of development, heterochronic"/>
    <property type="evidence" value="ECO:0000315"/>
    <property type="project" value="WormBase"/>
</dbReference>
<dbReference type="GO" id="GO:0006417">
    <property type="term" value="P:regulation of translation"/>
    <property type="evidence" value="ECO:0007669"/>
    <property type="project" value="UniProtKB-KW"/>
</dbReference>
<dbReference type="GO" id="GO:0009408">
    <property type="term" value="P:response to heat"/>
    <property type="evidence" value="ECO:0000315"/>
    <property type="project" value="WormBase"/>
</dbReference>
<dbReference type="GO" id="GO:0007548">
    <property type="term" value="P:sex differentiation"/>
    <property type="evidence" value="ECO:0007669"/>
    <property type="project" value="UniProtKB-KW"/>
</dbReference>
<dbReference type="GO" id="GO:0007549">
    <property type="term" value="P:sex-chromosome dosage compensation"/>
    <property type="evidence" value="ECO:0000316"/>
    <property type="project" value="WormBase"/>
</dbReference>
<dbReference type="Gene3D" id="3.30.160.60">
    <property type="entry name" value="Classic Zinc Finger"/>
    <property type="match status" value="1"/>
</dbReference>
<dbReference type="InterPro" id="IPR050888">
    <property type="entry name" value="ZnF_C2H2-type_TF"/>
</dbReference>
<dbReference type="InterPro" id="IPR036236">
    <property type="entry name" value="Znf_C2H2_sf"/>
</dbReference>
<dbReference type="InterPro" id="IPR013087">
    <property type="entry name" value="Znf_C2H2_type"/>
</dbReference>
<dbReference type="PANTHER" id="PTHR24406">
    <property type="entry name" value="TRANSCRIPTIONAL REPRESSOR CTCFL-RELATED"/>
    <property type="match status" value="1"/>
</dbReference>
<dbReference type="Pfam" id="PF00096">
    <property type="entry name" value="zf-C2H2"/>
    <property type="match status" value="2"/>
</dbReference>
<dbReference type="SMART" id="SM00355">
    <property type="entry name" value="ZnF_C2H2"/>
    <property type="match status" value="6"/>
</dbReference>
<dbReference type="SUPFAM" id="SSF57667">
    <property type="entry name" value="beta-beta-alpha zinc fingers"/>
    <property type="match status" value="1"/>
</dbReference>
<dbReference type="PROSITE" id="PS00028">
    <property type="entry name" value="ZINC_FINGER_C2H2_1"/>
    <property type="match status" value="1"/>
</dbReference>
<dbReference type="PROSITE" id="PS50157">
    <property type="entry name" value="ZINC_FINGER_C2H2_2"/>
    <property type="match status" value="3"/>
</dbReference>
<dbReference type="PROSITE" id="PS00142">
    <property type="entry name" value="ZINC_PROTEASE"/>
    <property type="match status" value="1"/>
</dbReference>
<name>SEA2_CAEEL</name>
<protein>
    <recommendedName>
        <fullName evidence="13">Signal element on autosome protein 2</fullName>
    </recommendedName>
</protein>